<sequence>MNSSWRVVVFLGLVILCHSRRARACNGGYEMIVHSIENCAGEGQIVTIDPKSTVTLMEDCKVKSKATARTVGFKTAMMDVTITKNGLPVLKETVDICANLEEASGNKEAAEIITMFGVPDHCPVAASEIRTDESQTYSLEKYKQHLLVAQGRSIIDVLVKHDKGESCFKIDMEVTSPNLIG</sequence>
<name>SAMSP_ANOGA</name>
<proteinExistence type="evidence at protein level"/>
<accession>A0A1S4HDQ2</accession>
<comment type="function">
    <text evidence="3">Decreases host neutrophil chemotaxis induced by N-formylmethionine-leucyl-phenylalanine (fMLP).</text>
</comment>
<comment type="function">
    <text evidence="3">(Microbial infection) Interacts with the surface of Plasmodium berghei sporozoites (PubMed:33306099). Enhances sporozoite gliding activity (PubMed:33306099). Enhances host hepatocyte traversal by sporozoites (PubMed:33306099).</text>
</comment>
<comment type="subcellular location">
    <subcellularLocation>
        <location evidence="5">Secreted</location>
    </subcellularLocation>
</comment>
<comment type="tissue specificity">
    <text evidence="3">Salivary gland (at protein level).</text>
</comment>
<comment type="tissue specificity">
    <text evidence="2">(Microbial infection) Detected with Plasmodium berghei sporozoites isolated from the saliva of infected Anopheles gambiae mosquitoes (at protein level).</text>
</comment>
<comment type="induction">
    <text evidence="3">(Microbial infection) Up-regulated in salivary gland following infection with P.berghei sporozoites.</text>
</comment>
<comment type="miscellaneous">
    <text evidence="3">Active immunization or antiserum against the protein reduce P.berghei liver burden in mice after exposure to the infected mosquitoes (PubMed:33306099). Individuals in malaria-endemic areas have higher levels of IgG recognizing the protein (PubMed:33306099).</text>
</comment>
<feature type="signal peptide" evidence="1">
    <location>
        <begin position="1"/>
        <end position="24"/>
    </location>
</feature>
<feature type="chain" id="PRO_0000461490" description="Sporozoite-associated mosquito saliva protein 1" evidence="1">
    <location>
        <begin position="25"/>
        <end position="181"/>
    </location>
</feature>
<dbReference type="EMBL" id="AAAB01008964">
    <property type="status" value="NOT_ANNOTATED_CDS"/>
    <property type="molecule type" value="Genomic_DNA"/>
</dbReference>
<dbReference type="RefSeq" id="XP_061516347.1">
    <property type="nucleotide sequence ID" value="XM_061660363.1"/>
</dbReference>
<dbReference type="EnsemblMetazoa" id="AGAP013726-RA">
    <property type="protein sequence ID" value="AGAP013726-PA"/>
    <property type="gene ID" value="AGAP013726"/>
</dbReference>
<dbReference type="GeneID" id="133393803"/>
<dbReference type="VEuPathDB" id="VectorBase:AGAMI1_010898"/>
<dbReference type="VEuPathDB" id="VectorBase:AGAP013726"/>
<dbReference type="InParanoid" id="A0A1S4HDQ2"/>
<dbReference type="OMA" id="EIMTMFG"/>
<dbReference type="OrthoDB" id="8184313at2759"/>
<dbReference type="Proteomes" id="UP000007062">
    <property type="component" value="Chromosome 3R"/>
</dbReference>
<dbReference type="GO" id="GO:0005576">
    <property type="term" value="C:extracellular region"/>
    <property type="evidence" value="ECO:0007669"/>
    <property type="project" value="UniProtKB-SubCell"/>
</dbReference>
<dbReference type="GO" id="GO:0051851">
    <property type="term" value="P:host-mediated perturbation of symbiont process"/>
    <property type="evidence" value="ECO:0000314"/>
    <property type="project" value="UniProtKB"/>
</dbReference>
<dbReference type="Gene3D" id="2.70.220.10">
    <property type="entry name" value="Ganglioside GM2 activator"/>
    <property type="match status" value="1"/>
</dbReference>
<dbReference type="InterPro" id="IPR036846">
    <property type="entry name" value="GM2-AP_sf"/>
</dbReference>
<keyword id="KW-1185">Reference proteome</keyword>
<keyword id="KW-0964">Secreted</keyword>
<keyword id="KW-0732">Signal</keyword>
<protein>
    <recommendedName>
        <fullName evidence="4">Sporozoite-associated mosquito saliva protein 1</fullName>
        <shortName evidence="4">SAMSP1</shortName>
    </recommendedName>
</protein>
<reference evidence="7" key="1">
    <citation type="journal article" date="2002" name="Science">
        <title>The genome sequence of the malaria mosquito Anopheles gambiae.</title>
        <authorList>
            <person name="Holt R.A."/>
            <person name="Subramanian G.M."/>
            <person name="Halpern A."/>
            <person name="Sutton G.G."/>
            <person name="Charlab R."/>
            <person name="Nusskern D.R."/>
            <person name="Wincker P."/>
            <person name="Clark A.G."/>
            <person name="Ribeiro J.M.C."/>
            <person name="Wides R."/>
            <person name="Salzberg S.L."/>
            <person name="Loftus B.J."/>
            <person name="Yandell M.D."/>
            <person name="Majoros W.H."/>
            <person name="Rusch D.B."/>
            <person name="Lai Z."/>
            <person name="Kraft C.L."/>
            <person name="Abril J.F."/>
            <person name="Anthouard V."/>
            <person name="Arensburger P."/>
            <person name="Atkinson P.W."/>
            <person name="Baden H."/>
            <person name="de Berardinis V."/>
            <person name="Baldwin D."/>
            <person name="Benes V."/>
            <person name="Biedler J."/>
            <person name="Blass C."/>
            <person name="Bolanos R."/>
            <person name="Boscus D."/>
            <person name="Barnstead M."/>
            <person name="Cai S."/>
            <person name="Center A."/>
            <person name="Chaturverdi K."/>
            <person name="Christophides G.K."/>
            <person name="Chrystal M.A.M."/>
            <person name="Clamp M."/>
            <person name="Cravchik A."/>
            <person name="Curwen V."/>
            <person name="Dana A."/>
            <person name="Delcher A."/>
            <person name="Dew I."/>
            <person name="Evans C.A."/>
            <person name="Flanigan M."/>
            <person name="Grundschober-Freimoser A."/>
            <person name="Friedli L."/>
            <person name="Gu Z."/>
            <person name="Guan P."/>
            <person name="Guigo R."/>
            <person name="Hillenmeyer M.E."/>
            <person name="Hladun S.L."/>
            <person name="Hogan J.R."/>
            <person name="Hong Y.S."/>
            <person name="Hoover J."/>
            <person name="Jaillon O."/>
            <person name="Ke Z."/>
            <person name="Kodira C.D."/>
            <person name="Kokoza E."/>
            <person name="Koutsos A."/>
            <person name="Letunic I."/>
            <person name="Levitsky A.A."/>
            <person name="Liang Y."/>
            <person name="Lin J.-J."/>
            <person name="Lobo N.F."/>
            <person name="Lopez J.R."/>
            <person name="Malek J.A."/>
            <person name="McIntosh T.C."/>
            <person name="Meister S."/>
            <person name="Miller J.R."/>
            <person name="Mobarry C."/>
            <person name="Mongin E."/>
            <person name="Murphy S.D."/>
            <person name="O'Brochta D.A."/>
            <person name="Pfannkoch C."/>
            <person name="Qi R."/>
            <person name="Regier M.A."/>
            <person name="Remington K."/>
            <person name="Shao H."/>
            <person name="Sharakhova M.V."/>
            <person name="Sitter C.D."/>
            <person name="Shetty J."/>
            <person name="Smith T.J."/>
            <person name="Strong R."/>
            <person name="Sun J."/>
            <person name="Thomasova D."/>
            <person name="Ton L.Q."/>
            <person name="Topalis P."/>
            <person name="Tu Z.J."/>
            <person name="Unger M.F."/>
            <person name="Walenz B."/>
            <person name="Wang A.H."/>
            <person name="Wang J."/>
            <person name="Wang M."/>
            <person name="Wang X."/>
            <person name="Woodford K.J."/>
            <person name="Wortman J.R."/>
            <person name="Wu M."/>
            <person name="Yao A."/>
            <person name="Zdobnov E.M."/>
            <person name="Zhang H."/>
            <person name="Zhao Q."/>
            <person name="Zhao S."/>
            <person name="Zhu S.C."/>
            <person name="Zhimulev I."/>
            <person name="Coluzzi M."/>
            <person name="della Torre A."/>
            <person name="Roth C.W."/>
            <person name="Louis C."/>
            <person name="Kalush F."/>
            <person name="Mural R.J."/>
            <person name="Myers E.W."/>
            <person name="Adams M.D."/>
            <person name="Smith H.O."/>
            <person name="Broder S."/>
            <person name="Gardner M.J."/>
            <person name="Fraser C.M."/>
            <person name="Birney E."/>
            <person name="Bork P."/>
            <person name="Brey P.T."/>
            <person name="Venter J.C."/>
            <person name="Weissenbach J."/>
            <person name="Kafatos F.C."/>
            <person name="Collins F.H."/>
            <person name="Hoffman S.L."/>
        </authorList>
    </citation>
    <scope>NUCLEOTIDE SEQUENCE [LARGE SCALE GENOMIC DNA]</scope>
    <source>
        <strain evidence="7">PEST</strain>
    </source>
</reference>
<reference evidence="6" key="2">
    <citation type="journal article" date="2004" name="Trends Parasitol.">
        <title>The Anopheles gambiae genome: an update.</title>
        <authorList>
            <person name="Mongin E."/>
            <person name="Louis C."/>
            <person name="Holt R.A."/>
            <person name="Birney E."/>
            <person name="Collins F.H."/>
        </authorList>
    </citation>
    <scope>NUCLEOTIDE SEQUENCE [LARGE SCALE GENOMIC DNA]</scope>
    <source>
        <strain evidence="6">PEST</strain>
    </source>
</reference>
<reference evidence="5" key="3">
    <citation type="journal article" date="2018" name="Nat. Commun.">
        <title>A mosquito salivary gland protein partially inhibits Plasmodium sporozoite cell traversal and transmission.</title>
        <authorList>
            <person name="Schleicher T.R."/>
            <person name="Yang J."/>
            <person name="Freudzon M."/>
            <person name="Rembisz A."/>
            <person name="Craft S."/>
            <person name="Hamilton M."/>
            <person name="Graham M."/>
            <person name="Mlambo G."/>
            <person name="Tripathi A.K."/>
            <person name="Li Y."/>
            <person name="Cresswell P."/>
            <person name="Sinnis P."/>
            <person name="Dimopoulos G."/>
            <person name="Fikrig E."/>
        </authorList>
    </citation>
    <scope>IDENTIFICATION BY MASS SPECTROMETRY</scope>
    <scope>TISSUE SPECIFICITY (MICROBIAL INFECTION)</scope>
</reference>
<reference evidence="5" key="4">
    <citation type="journal article" date="2021" name="J. Infect. Dis.">
        <title>The Effects of A Mosquito Salivary Protein on Sporozoite Traversal of Host Cells.</title>
        <authorList>
            <person name="Chuang Y.M."/>
            <person name="Agunbiade T.A."/>
            <person name="Tang X.D."/>
            <person name="Freudzon M."/>
            <person name="Almeras L."/>
            <person name="Fikrig E."/>
        </authorList>
    </citation>
    <scope>FUNCTION</scope>
    <scope>FUNCTION (MICROBIAL INFECTION)</scope>
    <scope>TISSUE SPECIFICITY</scope>
    <scope>INDUCTION (MICROBIAL INFECTION)</scope>
</reference>
<organism evidence="7">
    <name type="scientific">Anopheles gambiae</name>
    <name type="common">African malaria mosquito</name>
    <dbReference type="NCBI Taxonomy" id="7165"/>
    <lineage>
        <taxon>Eukaryota</taxon>
        <taxon>Metazoa</taxon>
        <taxon>Ecdysozoa</taxon>
        <taxon>Arthropoda</taxon>
        <taxon>Hexapoda</taxon>
        <taxon>Insecta</taxon>
        <taxon>Pterygota</taxon>
        <taxon>Neoptera</taxon>
        <taxon>Endopterygota</taxon>
        <taxon>Diptera</taxon>
        <taxon>Nematocera</taxon>
        <taxon>Culicoidea</taxon>
        <taxon>Culicidae</taxon>
        <taxon>Anophelinae</taxon>
        <taxon>Anopheles</taxon>
    </lineage>
</organism>
<evidence type="ECO:0000255" key="1"/>
<evidence type="ECO:0000269" key="2">
    <source>
    </source>
</evidence>
<evidence type="ECO:0000269" key="3">
    <source>
    </source>
</evidence>
<evidence type="ECO:0000303" key="4">
    <source>
    </source>
</evidence>
<evidence type="ECO:0000305" key="5"/>
<evidence type="ECO:0000312" key="6">
    <source>
        <dbReference type="EnsemblMetazoa" id="AGAP013726-PA"/>
    </source>
</evidence>
<evidence type="ECO:0000312" key="7">
    <source>
        <dbReference type="Proteomes" id="UP000007062"/>
    </source>
</evidence>